<keyword id="KW-0067">ATP-binding</keyword>
<keyword id="KW-0418">Kinase</keyword>
<keyword id="KW-0547">Nucleotide-binding</keyword>
<keyword id="KW-0597">Phosphoprotein</keyword>
<keyword id="KW-1185">Reference proteome</keyword>
<keyword id="KW-0723">Serine/threonine-protein kinase</keyword>
<keyword id="KW-0808">Transferase</keyword>
<name>KSG10_ARATH</name>
<sequence>MASSGLGNGVGTSRSAKGLKSSSSSVDWLTRDLAETRIRDKVETDDERDSEPDIIDGAGAEPGHVIRTTLRGRNGQSRQTVSYISEHVVGTGSFGMVFQAKCRETGEVVAIKKVLQDKRYKNRELQIMQMLDHPNAVALKHSFFSRTDNEEVYLNLVLEFVPETVNRVARSYSRTNQLMPLIYVKLYTYQICRALAYIHNSFGLCHRDIKPQNLLVNPHTHQLKICDFGSAKVLVKGEPNVSYICSRYYRAPELIFGASEYTTAIDIWSTGCVMAELLLGQPLFPGESGVDQLVEIIKVLGTPTREEIKCMNPNYTEFKFPQIKPHPWHKVFQKRLPPEAVDLLCRFFQYSPNLRCTALEACIHPLFDELRDPNTRLPNGRPLPPLFNFKPQELSGIPPEIVNRLVPEHARKQNLFMALHS</sequence>
<dbReference type="EC" id="2.7.11.1"/>
<dbReference type="EMBL" id="X79279">
    <property type="protein sequence ID" value="CAA55866.1"/>
    <property type="molecule type" value="Genomic_DNA"/>
</dbReference>
<dbReference type="EMBL" id="AC000132">
    <property type="protein sequence ID" value="AAB60754.1"/>
    <property type="status" value="ALT_SEQ"/>
    <property type="molecule type" value="Genomic_DNA"/>
</dbReference>
<dbReference type="EMBL" id="CP002684">
    <property type="protein sequence ID" value="AEE28501.1"/>
    <property type="molecule type" value="Genomic_DNA"/>
</dbReference>
<dbReference type="EMBL" id="CP002684">
    <property type="protein sequence ID" value="AEE28502.1"/>
    <property type="molecule type" value="Genomic_DNA"/>
</dbReference>
<dbReference type="EMBL" id="CP002684">
    <property type="protein sequence ID" value="AEE28503.1"/>
    <property type="molecule type" value="Genomic_DNA"/>
</dbReference>
<dbReference type="EMBL" id="CP002684">
    <property type="protein sequence ID" value="AEE28504.1"/>
    <property type="molecule type" value="Genomic_DNA"/>
</dbReference>
<dbReference type="EMBL" id="CP002684">
    <property type="protein sequence ID" value="AEE28505.1"/>
    <property type="molecule type" value="Genomic_DNA"/>
</dbReference>
<dbReference type="EMBL" id="CP002684">
    <property type="protein sequence ID" value="AEE28506.1"/>
    <property type="molecule type" value="Genomic_DNA"/>
</dbReference>
<dbReference type="EMBL" id="CP002684">
    <property type="protein sequence ID" value="ANM60294.1"/>
    <property type="molecule type" value="Genomic_DNA"/>
</dbReference>
<dbReference type="EMBL" id="CP002684">
    <property type="protein sequence ID" value="ANM60295.1"/>
    <property type="molecule type" value="Genomic_DNA"/>
</dbReference>
<dbReference type="EMBL" id="CP002684">
    <property type="protein sequence ID" value="ANM60296.1"/>
    <property type="molecule type" value="Genomic_DNA"/>
</dbReference>
<dbReference type="EMBL" id="CP002684">
    <property type="protein sequence ID" value="ANM60298.1"/>
    <property type="molecule type" value="Genomic_DNA"/>
</dbReference>
<dbReference type="EMBL" id="AY092987">
    <property type="protein sequence ID" value="AAM12986.1"/>
    <property type="molecule type" value="mRNA"/>
</dbReference>
<dbReference type="EMBL" id="BT000132">
    <property type="protein sequence ID" value="AAN15451.1"/>
    <property type="molecule type" value="mRNA"/>
</dbReference>
<dbReference type="EMBL" id="Y07597">
    <property type="protein sequence ID" value="CAA68872.1"/>
    <property type="molecule type" value="mRNA"/>
</dbReference>
<dbReference type="PIR" id="F86232">
    <property type="entry name" value="F86232"/>
</dbReference>
<dbReference type="PIR" id="S51938">
    <property type="entry name" value="S51938"/>
</dbReference>
<dbReference type="RefSeq" id="NP_001031013.1">
    <property type="nucleotide sequence ID" value="NM_001035936.1"/>
</dbReference>
<dbReference type="RefSeq" id="NP_001077498.1">
    <property type="nucleotide sequence ID" value="NM_001084029.2"/>
</dbReference>
<dbReference type="RefSeq" id="NP_001077499.1">
    <property type="nucleotide sequence ID" value="NM_001084030.2"/>
</dbReference>
<dbReference type="RefSeq" id="NP_001318967.1">
    <property type="nucleotide sequence ID" value="NM_001331857.1"/>
</dbReference>
<dbReference type="RefSeq" id="NP_001322592.1">
    <property type="nucleotide sequence ID" value="NM_001331858.1"/>
</dbReference>
<dbReference type="RefSeq" id="NP_001322593.1">
    <property type="nucleotide sequence ID" value="NM_001331859.1"/>
</dbReference>
<dbReference type="RefSeq" id="NP_001322595.1">
    <property type="nucleotide sequence ID" value="NM_001331855.1"/>
</dbReference>
<dbReference type="RefSeq" id="NP_172455.1">
    <property type="nucleotide sequence ID" value="NM_100858.5"/>
</dbReference>
<dbReference type="RefSeq" id="NP_849627.1">
    <property type="nucleotide sequence ID" value="NM_179296.1"/>
</dbReference>
<dbReference type="RefSeq" id="NP_973801.1">
    <property type="nucleotide sequence ID" value="NM_202072.2"/>
</dbReference>
<dbReference type="SMR" id="Q39019"/>
<dbReference type="BioGRID" id="22757">
    <property type="interactions" value="7"/>
</dbReference>
<dbReference type="FunCoup" id="Q39019">
    <property type="interactions" value="3521"/>
</dbReference>
<dbReference type="IntAct" id="Q39019">
    <property type="interactions" value="6"/>
</dbReference>
<dbReference type="STRING" id="3702.Q39019"/>
<dbReference type="iPTMnet" id="Q39019"/>
<dbReference type="PaxDb" id="3702-AT1G09840.3"/>
<dbReference type="ProteomicsDB" id="250767"/>
<dbReference type="EnsemblPlants" id="AT1G09840.1">
    <property type="protein sequence ID" value="AT1G09840.1"/>
    <property type="gene ID" value="AT1G09840"/>
</dbReference>
<dbReference type="EnsemblPlants" id="AT1G09840.10">
    <property type="protein sequence ID" value="AT1G09840.10"/>
    <property type="gene ID" value="AT1G09840"/>
</dbReference>
<dbReference type="EnsemblPlants" id="AT1G09840.2">
    <property type="protein sequence ID" value="AT1G09840.2"/>
    <property type="gene ID" value="AT1G09840"/>
</dbReference>
<dbReference type="EnsemblPlants" id="AT1G09840.3">
    <property type="protein sequence ID" value="AT1G09840.3"/>
    <property type="gene ID" value="AT1G09840"/>
</dbReference>
<dbReference type="EnsemblPlants" id="AT1G09840.4">
    <property type="protein sequence ID" value="AT1G09840.4"/>
    <property type="gene ID" value="AT1G09840"/>
</dbReference>
<dbReference type="EnsemblPlants" id="AT1G09840.5">
    <property type="protein sequence ID" value="AT1G09840.5"/>
    <property type="gene ID" value="AT1G09840"/>
</dbReference>
<dbReference type="EnsemblPlants" id="AT1G09840.6">
    <property type="protein sequence ID" value="AT1G09840.6"/>
    <property type="gene ID" value="AT1G09840"/>
</dbReference>
<dbReference type="EnsemblPlants" id="AT1G09840.7">
    <property type="protein sequence ID" value="AT1G09840.7"/>
    <property type="gene ID" value="AT1G09840"/>
</dbReference>
<dbReference type="EnsemblPlants" id="AT1G09840.8">
    <property type="protein sequence ID" value="AT1G09840.8"/>
    <property type="gene ID" value="AT1G09840"/>
</dbReference>
<dbReference type="EnsemblPlants" id="AT1G09840.9">
    <property type="protein sequence ID" value="AT1G09840.9"/>
    <property type="gene ID" value="AT1G09840"/>
</dbReference>
<dbReference type="GeneID" id="837516"/>
<dbReference type="Gramene" id="AT1G09840.1">
    <property type="protein sequence ID" value="AT1G09840.1"/>
    <property type="gene ID" value="AT1G09840"/>
</dbReference>
<dbReference type="Gramene" id="AT1G09840.10">
    <property type="protein sequence ID" value="AT1G09840.10"/>
    <property type="gene ID" value="AT1G09840"/>
</dbReference>
<dbReference type="Gramene" id="AT1G09840.2">
    <property type="protein sequence ID" value="AT1G09840.2"/>
    <property type="gene ID" value="AT1G09840"/>
</dbReference>
<dbReference type="Gramene" id="AT1G09840.3">
    <property type="protein sequence ID" value="AT1G09840.3"/>
    <property type="gene ID" value="AT1G09840"/>
</dbReference>
<dbReference type="Gramene" id="AT1G09840.4">
    <property type="protein sequence ID" value="AT1G09840.4"/>
    <property type="gene ID" value="AT1G09840"/>
</dbReference>
<dbReference type="Gramene" id="AT1G09840.5">
    <property type="protein sequence ID" value="AT1G09840.5"/>
    <property type="gene ID" value="AT1G09840"/>
</dbReference>
<dbReference type="Gramene" id="AT1G09840.6">
    <property type="protein sequence ID" value="AT1G09840.6"/>
    <property type="gene ID" value="AT1G09840"/>
</dbReference>
<dbReference type="Gramene" id="AT1G09840.7">
    <property type="protein sequence ID" value="AT1G09840.7"/>
    <property type="gene ID" value="AT1G09840"/>
</dbReference>
<dbReference type="Gramene" id="AT1G09840.8">
    <property type="protein sequence ID" value="AT1G09840.8"/>
    <property type="gene ID" value="AT1G09840"/>
</dbReference>
<dbReference type="Gramene" id="AT1G09840.9">
    <property type="protein sequence ID" value="AT1G09840.9"/>
    <property type="gene ID" value="AT1G09840"/>
</dbReference>
<dbReference type="KEGG" id="ath:AT1G09840"/>
<dbReference type="Araport" id="AT1G09840"/>
<dbReference type="TAIR" id="AT1G09840">
    <property type="gene designation" value="SK41"/>
</dbReference>
<dbReference type="eggNOG" id="KOG0658">
    <property type="taxonomic scope" value="Eukaryota"/>
</dbReference>
<dbReference type="HOGENOM" id="CLU_000288_181_20_1"/>
<dbReference type="InParanoid" id="Q39019"/>
<dbReference type="OMA" id="FSNEEMC"/>
<dbReference type="OrthoDB" id="272141at2759"/>
<dbReference type="PhylomeDB" id="Q39019"/>
<dbReference type="BRENDA" id="2.7.11.26">
    <property type="organism ID" value="399"/>
</dbReference>
<dbReference type="PRO" id="PR:Q39019"/>
<dbReference type="Proteomes" id="UP000006548">
    <property type="component" value="Chromosome 1"/>
</dbReference>
<dbReference type="ExpressionAtlas" id="Q39019">
    <property type="expression patterns" value="baseline and differential"/>
</dbReference>
<dbReference type="GO" id="GO:0005524">
    <property type="term" value="F:ATP binding"/>
    <property type="evidence" value="ECO:0007669"/>
    <property type="project" value="UniProtKB-KW"/>
</dbReference>
<dbReference type="GO" id="GO:0106310">
    <property type="term" value="F:protein serine kinase activity"/>
    <property type="evidence" value="ECO:0007669"/>
    <property type="project" value="RHEA"/>
</dbReference>
<dbReference type="GO" id="GO:0004674">
    <property type="term" value="F:protein serine/threonine kinase activity"/>
    <property type="evidence" value="ECO:0007669"/>
    <property type="project" value="UniProtKB-KW"/>
</dbReference>
<dbReference type="CDD" id="cd14137">
    <property type="entry name" value="STKc_GSK3"/>
    <property type="match status" value="1"/>
</dbReference>
<dbReference type="FunFam" id="3.30.200.20:FF:000009">
    <property type="entry name" value="Glycogen synthase kinase-3 beta"/>
    <property type="match status" value="1"/>
</dbReference>
<dbReference type="FunFam" id="1.10.510.10:FF:000082">
    <property type="entry name" value="Shaggy-related protein kinase kappa"/>
    <property type="match status" value="1"/>
</dbReference>
<dbReference type="Gene3D" id="3.30.200.20">
    <property type="entry name" value="Phosphorylase Kinase, domain 1"/>
    <property type="match status" value="1"/>
</dbReference>
<dbReference type="Gene3D" id="1.10.510.10">
    <property type="entry name" value="Transferase(Phosphotransferase) domain 1"/>
    <property type="match status" value="1"/>
</dbReference>
<dbReference type="InterPro" id="IPR050591">
    <property type="entry name" value="GSK-3"/>
</dbReference>
<dbReference type="InterPro" id="IPR011009">
    <property type="entry name" value="Kinase-like_dom_sf"/>
</dbReference>
<dbReference type="InterPro" id="IPR000719">
    <property type="entry name" value="Prot_kinase_dom"/>
</dbReference>
<dbReference type="InterPro" id="IPR017441">
    <property type="entry name" value="Protein_kinase_ATP_BS"/>
</dbReference>
<dbReference type="InterPro" id="IPR008271">
    <property type="entry name" value="Ser/Thr_kinase_AS"/>
</dbReference>
<dbReference type="InterPro" id="IPR039192">
    <property type="entry name" value="STKc_GSK3"/>
</dbReference>
<dbReference type="PANTHER" id="PTHR24057">
    <property type="entry name" value="GLYCOGEN SYNTHASE KINASE-3 ALPHA"/>
    <property type="match status" value="1"/>
</dbReference>
<dbReference type="PANTHER" id="PTHR24057:SF40">
    <property type="entry name" value="SHAGGY-RELATED PROTEIN KINASE DELTA-RELATED"/>
    <property type="match status" value="1"/>
</dbReference>
<dbReference type="Pfam" id="PF00069">
    <property type="entry name" value="Pkinase"/>
    <property type="match status" value="1"/>
</dbReference>
<dbReference type="SMART" id="SM00220">
    <property type="entry name" value="S_TKc"/>
    <property type="match status" value="1"/>
</dbReference>
<dbReference type="SUPFAM" id="SSF56112">
    <property type="entry name" value="Protein kinase-like (PK-like)"/>
    <property type="match status" value="1"/>
</dbReference>
<dbReference type="PROSITE" id="PS00107">
    <property type="entry name" value="PROTEIN_KINASE_ATP"/>
    <property type="match status" value="1"/>
</dbReference>
<dbReference type="PROSITE" id="PS50011">
    <property type="entry name" value="PROTEIN_KINASE_DOM"/>
    <property type="match status" value="1"/>
</dbReference>
<dbReference type="PROSITE" id="PS00108">
    <property type="entry name" value="PROTEIN_KINASE_ST"/>
    <property type="match status" value="1"/>
</dbReference>
<feature type="chain" id="PRO_0000086225" description="Shaggy-related protein kinase kappa">
    <location>
        <begin position="1"/>
        <end position="421"/>
    </location>
</feature>
<feature type="domain" description="Protein kinase" evidence="3">
    <location>
        <begin position="83"/>
        <end position="367"/>
    </location>
</feature>
<feature type="region of interest" description="Disordered" evidence="5">
    <location>
        <begin position="1"/>
        <end position="60"/>
    </location>
</feature>
<feature type="compositionally biased region" description="Gly residues" evidence="5">
    <location>
        <begin position="1"/>
        <end position="10"/>
    </location>
</feature>
<feature type="compositionally biased region" description="Basic and acidic residues" evidence="5">
    <location>
        <begin position="29"/>
        <end position="42"/>
    </location>
</feature>
<feature type="compositionally biased region" description="Acidic residues" evidence="5">
    <location>
        <begin position="43"/>
        <end position="54"/>
    </location>
</feature>
<feature type="active site" description="Proton acceptor" evidence="3 4">
    <location>
        <position position="208"/>
    </location>
</feature>
<feature type="binding site" evidence="3">
    <location>
        <begin position="89"/>
        <end position="97"/>
    </location>
    <ligand>
        <name>ATP</name>
        <dbReference type="ChEBI" id="CHEBI:30616"/>
    </ligand>
</feature>
<feature type="binding site" evidence="3">
    <location>
        <position position="112"/>
    </location>
    <ligand>
        <name>ATP</name>
        <dbReference type="ChEBI" id="CHEBI:30616"/>
    </ligand>
</feature>
<feature type="modified residue" description="Phosphotyrosine" evidence="2">
    <location>
        <position position="243"/>
    </location>
</feature>
<feature type="sequence conflict" description="In Ref. 1; CAA55866 and 5; CAA68872." evidence="6" ref="1 5">
    <original>P</original>
    <variation>G</variation>
    <location>
        <position position="313"/>
    </location>
</feature>
<evidence type="ECO:0000250" key="1"/>
<evidence type="ECO:0000250" key="2">
    <source>
        <dbReference type="UniProtKB" id="Q39011"/>
    </source>
</evidence>
<evidence type="ECO:0000255" key="3">
    <source>
        <dbReference type="PROSITE-ProRule" id="PRU00159"/>
    </source>
</evidence>
<evidence type="ECO:0000255" key="4">
    <source>
        <dbReference type="PROSITE-ProRule" id="PRU10027"/>
    </source>
</evidence>
<evidence type="ECO:0000256" key="5">
    <source>
        <dbReference type="SAM" id="MobiDB-lite"/>
    </source>
</evidence>
<evidence type="ECO:0000305" key="6"/>
<evidence type="ECO:0000312" key="7">
    <source>
        <dbReference type="Araport" id="AT1G09840"/>
    </source>
</evidence>
<evidence type="ECO:0000312" key="8">
    <source>
        <dbReference type="EMBL" id="AAB60754.1"/>
    </source>
</evidence>
<reference key="1">
    <citation type="journal article" date="1995" name="Plant Mol. Biol.">
        <title>Inflorescence-specific expression of AtK-1, a novel Arabidopsis thaliana homologue of shaggy/glycogen synthase kinase-3.</title>
        <authorList>
            <person name="Jonak C."/>
            <person name="Heberle-Bors E."/>
            <person name="Hirt H."/>
        </authorList>
    </citation>
    <scope>NUCLEOTIDE SEQUENCE [GENOMIC DNA]</scope>
</reference>
<reference key="2">
    <citation type="journal article" date="2000" name="Nature">
        <title>Sequence and analysis of chromosome 1 of the plant Arabidopsis thaliana.</title>
        <authorList>
            <person name="Theologis A."/>
            <person name="Ecker J.R."/>
            <person name="Palm C.J."/>
            <person name="Federspiel N.A."/>
            <person name="Kaul S."/>
            <person name="White O."/>
            <person name="Alonso J."/>
            <person name="Altafi H."/>
            <person name="Araujo R."/>
            <person name="Bowman C.L."/>
            <person name="Brooks S.Y."/>
            <person name="Buehler E."/>
            <person name="Chan A."/>
            <person name="Chao Q."/>
            <person name="Chen H."/>
            <person name="Cheuk R.F."/>
            <person name="Chin C.W."/>
            <person name="Chung M.K."/>
            <person name="Conn L."/>
            <person name="Conway A.B."/>
            <person name="Conway A.R."/>
            <person name="Creasy T.H."/>
            <person name="Dewar K."/>
            <person name="Dunn P."/>
            <person name="Etgu P."/>
            <person name="Feldblyum T.V."/>
            <person name="Feng J.-D."/>
            <person name="Fong B."/>
            <person name="Fujii C.Y."/>
            <person name="Gill J.E."/>
            <person name="Goldsmith A.D."/>
            <person name="Haas B."/>
            <person name="Hansen N.F."/>
            <person name="Hughes B."/>
            <person name="Huizar L."/>
            <person name="Hunter J.L."/>
            <person name="Jenkins J."/>
            <person name="Johnson-Hopson C."/>
            <person name="Khan S."/>
            <person name="Khaykin E."/>
            <person name="Kim C.J."/>
            <person name="Koo H.L."/>
            <person name="Kremenetskaia I."/>
            <person name="Kurtz D.B."/>
            <person name="Kwan A."/>
            <person name="Lam B."/>
            <person name="Langin-Hooper S."/>
            <person name="Lee A."/>
            <person name="Lee J.M."/>
            <person name="Lenz C.A."/>
            <person name="Li J.H."/>
            <person name="Li Y.-P."/>
            <person name="Lin X."/>
            <person name="Liu S.X."/>
            <person name="Liu Z.A."/>
            <person name="Luros J.S."/>
            <person name="Maiti R."/>
            <person name="Marziali A."/>
            <person name="Militscher J."/>
            <person name="Miranda M."/>
            <person name="Nguyen M."/>
            <person name="Nierman W.C."/>
            <person name="Osborne B.I."/>
            <person name="Pai G."/>
            <person name="Peterson J."/>
            <person name="Pham P.K."/>
            <person name="Rizzo M."/>
            <person name="Rooney T."/>
            <person name="Rowley D."/>
            <person name="Sakano H."/>
            <person name="Salzberg S.L."/>
            <person name="Schwartz J.R."/>
            <person name="Shinn P."/>
            <person name="Southwick A.M."/>
            <person name="Sun H."/>
            <person name="Tallon L.J."/>
            <person name="Tambunga G."/>
            <person name="Toriumi M.J."/>
            <person name="Town C.D."/>
            <person name="Utterback T."/>
            <person name="Van Aken S."/>
            <person name="Vaysberg M."/>
            <person name="Vysotskaia V.S."/>
            <person name="Walker M."/>
            <person name="Wu D."/>
            <person name="Yu G."/>
            <person name="Fraser C.M."/>
            <person name="Venter J.C."/>
            <person name="Davis R.W."/>
        </authorList>
    </citation>
    <scope>NUCLEOTIDE SEQUENCE [LARGE SCALE GENOMIC DNA]</scope>
    <source>
        <strain>cv. Columbia</strain>
    </source>
</reference>
<reference key="3">
    <citation type="journal article" date="2017" name="Plant J.">
        <title>Araport11: a complete reannotation of the Arabidopsis thaliana reference genome.</title>
        <authorList>
            <person name="Cheng C.Y."/>
            <person name="Krishnakumar V."/>
            <person name="Chan A.P."/>
            <person name="Thibaud-Nissen F."/>
            <person name="Schobel S."/>
            <person name="Town C.D."/>
        </authorList>
    </citation>
    <scope>GENOME REANNOTATION</scope>
    <source>
        <strain>cv. Columbia</strain>
    </source>
</reference>
<reference key="4">
    <citation type="journal article" date="2003" name="Science">
        <title>Empirical analysis of transcriptional activity in the Arabidopsis genome.</title>
        <authorList>
            <person name="Yamada K."/>
            <person name="Lim J."/>
            <person name="Dale J.M."/>
            <person name="Chen H."/>
            <person name="Shinn P."/>
            <person name="Palm C.J."/>
            <person name="Southwick A.M."/>
            <person name="Wu H.C."/>
            <person name="Kim C.J."/>
            <person name="Nguyen M."/>
            <person name="Pham P.K."/>
            <person name="Cheuk R.F."/>
            <person name="Karlin-Newmann G."/>
            <person name="Liu S.X."/>
            <person name="Lam B."/>
            <person name="Sakano H."/>
            <person name="Wu T."/>
            <person name="Yu G."/>
            <person name="Miranda M."/>
            <person name="Quach H.L."/>
            <person name="Tripp M."/>
            <person name="Chang C.H."/>
            <person name="Lee J.M."/>
            <person name="Toriumi M.J."/>
            <person name="Chan M.M."/>
            <person name="Tang C.C."/>
            <person name="Onodera C.S."/>
            <person name="Deng J.M."/>
            <person name="Akiyama K."/>
            <person name="Ansari Y."/>
            <person name="Arakawa T."/>
            <person name="Banh J."/>
            <person name="Banno F."/>
            <person name="Bowser L."/>
            <person name="Brooks S.Y."/>
            <person name="Carninci P."/>
            <person name="Chao Q."/>
            <person name="Choy N."/>
            <person name="Enju A."/>
            <person name="Goldsmith A.D."/>
            <person name="Gurjal M."/>
            <person name="Hansen N.F."/>
            <person name="Hayashizaki Y."/>
            <person name="Johnson-Hopson C."/>
            <person name="Hsuan V.W."/>
            <person name="Iida K."/>
            <person name="Karnes M."/>
            <person name="Khan S."/>
            <person name="Koesema E."/>
            <person name="Ishida J."/>
            <person name="Jiang P.X."/>
            <person name="Jones T."/>
            <person name="Kawai J."/>
            <person name="Kamiya A."/>
            <person name="Meyers C."/>
            <person name="Nakajima M."/>
            <person name="Narusaka M."/>
            <person name="Seki M."/>
            <person name="Sakurai T."/>
            <person name="Satou M."/>
            <person name="Tamse R."/>
            <person name="Vaysberg M."/>
            <person name="Wallender E.K."/>
            <person name="Wong C."/>
            <person name="Yamamura Y."/>
            <person name="Yuan S."/>
            <person name="Shinozaki K."/>
            <person name="Davis R.W."/>
            <person name="Theologis A."/>
            <person name="Ecker J.R."/>
        </authorList>
    </citation>
    <scope>NUCLEOTIDE SEQUENCE [LARGE SCALE MRNA]</scope>
    <source>
        <strain>cv. Columbia</strain>
    </source>
</reference>
<reference key="5">
    <citation type="submission" date="1996-08" db="EMBL/GenBank/DDBJ databases">
        <authorList>
            <person name="Carnier M.C."/>
            <person name="Kreis M."/>
            <person name="Dornelas M.C."/>
        </authorList>
    </citation>
    <scope>NUCLEOTIDE SEQUENCE [MRNA] OF 47-421</scope>
    <source>
        <strain>cv. Columbia</strain>
    </source>
</reference>
<gene>
    <name type="primary">ASK10</name>
    <name type="synonym">HIR1</name>
    <name type="synonym">SK41</name>
    <name evidence="7" type="ordered locus">At1g09840</name>
    <name evidence="8" type="ORF">F21M12.23</name>
</gene>
<protein>
    <recommendedName>
        <fullName>Shaggy-related protein kinase kappa</fullName>
        <shortName>AtHIR1</shortName>
        <ecNumber>2.7.11.1</ecNumber>
    </recommendedName>
    <alternativeName>
        <fullName>ASK-kappa</fullName>
        <shortName>AtK-1</shortName>
    </alternativeName>
    <alternativeName>
        <fullName>Shaggy-related protein kinase 41</fullName>
        <shortName>AtSK41</shortName>
    </alternativeName>
</protein>
<proteinExistence type="evidence at transcript level"/>
<comment type="function">
    <text evidence="1">May mediate extracellular signals to regulate transcription in differentiating cells.</text>
</comment>
<comment type="catalytic activity">
    <reaction>
        <text>L-seryl-[protein] + ATP = O-phospho-L-seryl-[protein] + ADP + H(+)</text>
        <dbReference type="Rhea" id="RHEA:17989"/>
        <dbReference type="Rhea" id="RHEA-COMP:9863"/>
        <dbReference type="Rhea" id="RHEA-COMP:11604"/>
        <dbReference type="ChEBI" id="CHEBI:15378"/>
        <dbReference type="ChEBI" id="CHEBI:29999"/>
        <dbReference type="ChEBI" id="CHEBI:30616"/>
        <dbReference type="ChEBI" id="CHEBI:83421"/>
        <dbReference type="ChEBI" id="CHEBI:456216"/>
        <dbReference type="EC" id="2.7.11.1"/>
    </reaction>
</comment>
<comment type="catalytic activity">
    <reaction>
        <text>L-threonyl-[protein] + ATP = O-phospho-L-threonyl-[protein] + ADP + H(+)</text>
        <dbReference type="Rhea" id="RHEA:46608"/>
        <dbReference type="Rhea" id="RHEA-COMP:11060"/>
        <dbReference type="Rhea" id="RHEA-COMP:11605"/>
        <dbReference type="ChEBI" id="CHEBI:15378"/>
        <dbReference type="ChEBI" id="CHEBI:30013"/>
        <dbReference type="ChEBI" id="CHEBI:30616"/>
        <dbReference type="ChEBI" id="CHEBI:61977"/>
        <dbReference type="ChEBI" id="CHEBI:456216"/>
        <dbReference type="EC" id="2.7.11.1"/>
    </reaction>
</comment>
<comment type="tissue specificity">
    <text>Expressed exclusively in inflorescences.</text>
</comment>
<comment type="PTM">
    <text evidence="1">Autophosphorylated mainly on threonine and serine residues.</text>
</comment>
<comment type="similarity">
    <text evidence="6">Belongs to the protein kinase superfamily. CMGC Ser/Thr protein kinase family. GSK-3 subfamily.</text>
</comment>
<comment type="sequence caution" evidence="6">
    <conflict type="erroneous gene model prediction">
        <sequence resource="EMBL-CDS" id="AAB60754"/>
    </conflict>
</comment>
<organism>
    <name type="scientific">Arabidopsis thaliana</name>
    <name type="common">Mouse-ear cress</name>
    <dbReference type="NCBI Taxonomy" id="3702"/>
    <lineage>
        <taxon>Eukaryota</taxon>
        <taxon>Viridiplantae</taxon>
        <taxon>Streptophyta</taxon>
        <taxon>Embryophyta</taxon>
        <taxon>Tracheophyta</taxon>
        <taxon>Spermatophyta</taxon>
        <taxon>Magnoliopsida</taxon>
        <taxon>eudicotyledons</taxon>
        <taxon>Gunneridae</taxon>
        <taxon>Pentapetalae</taxon>
        <taxon>rosids</taxon>
        <taxon>malvids</taxon>
        <taxon>Brassicales</taxon>
        <taxon>Brassicaceae</taxon>
        <taxon>Camelineae</taxon>
        <taxon>Arabidopsis</taxon>
    </lineage>
</organism>
<accession>Q39019</accession>
<accession>O04506</accession>
<accession>Q96244</accession>